<dbReference type="EC" id="2.5.1.61" evidence="1"/>
<dbReference type="EMBL" id="CP000325">
    <property type="protein sequence ID" value="ABL06548.1"/>
    <property type="molecule type" value="Genomic_DNA"/>
</dbReference>
<dbReference type="RefSeq" id="WP_011742145.1">
    <property type="nucleotide sequence ID" value="NC_008611.1"/>
</dbReference>
<dbReference type="SMR" id="A0PW29"/>
<dbReference type="KEGG" id="mul:MUL_4599"/>
<dbReference type="eggNOG" id="COG0181">
    <property type="taxonomic scope" value="Bacteria"/>
</dbReference>
<dbReference type="HOGENOM" id="CLU_019704_0_2_11"/>
<dbReference type="UniPathway" id="UPA00251">
    <property type="reaction ID" value="UER00319"/>
</dbReference>
<dbReference type="Proteomes" id="UP000000765">
    <property type="component" value="Chromosome"/>
</dbReference>
<dbReference type="GO" id="GO:0005737">
    <property type="term" value="C:cytoplasm"/>
    <property type="evidence" value="ECO:0007669"/>
    <property type="project" value="TreeGrafter"/>
</dbReference>
<dbReference type="GO" id="GO:0004418">
    <property type="term" value="F:hydroxymethylbilane synthase activity"/>
    <property type="evidence" value="ECO:0007669"/>
    <property type="project" value="UniProtKB-UniRule"/>
</dbReference>
<dbReference type="GO" id="GO:0006782">
    <property type="term" value="P:protoporphyrinogen IX biosynthetic process"/>
    <property type="evidence" value="ECO:0007669"/>
    <property type="project" value="UniProtKB-UniRule"/>
</dbReference>
<dbReference type="FunFam" id="3.30.160.40:FF:000001">
    <property type="entry name" value="Porphobilinogen deaminase"/>
    <property type="match status" value="1"/>
</dbReference>
<dbReference type="FunFam" id="3.40.190.10:FF:000005">
    <property type="entry name" value="Porphobilinogen deaminase"/>
    <property type="match status" value="1"/>
</dbReference>
<dbReference type="Gene3D" id="3.40.190.10">
    <property type="entry name" value="Periplasmic binding protein-like II"/>
    <property type="match status" value="2"/>
</dbReference>
<dbReference type="Gene3D" id="3.30.160.40">
    <property type="entry name" value="Porphobilinogen deaminase, C-terminal domain"/>
    <property type="match status" value="1"/>
</dbReference>
<dbReference type="HAMAP" id="MF_00260">
    <property type="entry name" value="Porphobil_deam"/>
    <property type="match status" value="1"/>
</dbReference>
<dbReference type="InterPro" id="IPR000860">
    <property type="entry name" value="HemC"/>
</dbReference>
<dbReference type="InterPro" id="IPR022419">
    <property type="entry name" value="Porphobilin_deaminase_cofac_BS"/>
</dbReference>
<dbReference type="InterPro" id="IPR022417">
    <property type="entry name" value="Porphobilin_deaminase_N"/>
</dbReference>
<dbReference type="InterPro" id="IPR022418">
    <property type="entry name" value="Porphobilinogen_deaminase_C"/>
</dbReference>
<dbReference type="InterPro" id="IPR036803">
    <property type="entry name" value="Porphobilinogen_deaminase_C_sf"/>
</dbReference>
<dbReference type="NCBIfam" id="TIGR00212">
    <property type="entry name" value="hemC"/>
    <property type="match status" value="1"/>
</dbReference>
<dbReference type="PANTHER" id="PTHR11557">
    <property type="entry name" value="PORPHOBILINOGEN DEAMINASE"/>
    <property type="match status" value="1"/>
</dbReference>
<dbReference type="PANTHER" id="PTHR11557:SF0">
    <property type="entry name" value="PORPHOBILINOGEN DEAMINASE"/>
    <property type="match status" value="1"/>
</dbReference>
<dbReference type="Pfam" id="PF01379">
    <property type="entry name" value="Porphobil_deam"/>
    <property type="match status" value="1"/>
</dbReference>
<dbReference type="Pfam" id="PF03900">
    <property type="entry name" value="Porphobil_deamC"/>
    <property type="match status" value="1"/>
</dbReference>
<dbReference type="PIRSF" id="PIRSF001438">
    <property type="entry name" value="4pyrrol_synth_OHMeBilane_synth"/>
    <property type="match status" value="1"/>
</dbReference>
<dbReference type="PRINTS" id="PR00151">
    <property type="entry name" value="PORPHBDMNASE"/>
</dbReference>
<dbReference type="SUPFAM" id="SSF53850">
    <property type="entry name" value="Periplasmic binding protein-like II"/>
    <property type="match status" value="1"/>
</dbReference>
<dbReference type="SUPFAM" id="SSF54782">
    <property type="entry name" value="Porphobilinogen deaminase (hydroxymethylbilane synthase), C-terminal domain"/>
    <property type="match status" value="1"/>
</dbReference>
<dbReference type="PROSITE" id="PS00533">
    <property type="entry name" value="PORPHOBILINOGEN_DEAM"/>
    <property type="match status" value="1"/>
</dbReference>
<feature type="chain" id="PRO_0000304253" description="Porphobilinogen deaminase">
    <location>
        <begin position="1"/>
        <end position="314"/>
    </location>
</feature>
<feature type="modified residue" description="S-(dipyrrolylmethanemethyl)cysteine" evidence="1">
    <location>
        <position position="234"/>
    </location>
</feature>
<organism>
    <name type="scientific">Mycobacterium ulcerans (strain Agy99)</name>
    <dbReference type="NCBI Taxonomy" id="362242"/>
    <lineage>
        <taxon>Bacteria</taxon>
        <taxon>Bacillati</taxon>
        <taxon>Actinomycetota</taxon>
        <taxon>Actinomycetes</taxon>
        <taxon>Mycobacteriales</taxon>
        <taxon>Mycobacteriaceae</taxon>
        <taxon>Mycobacterium</taxon>
        <taxon>Mycobacterium ulcerans group</taxon>
    </lineage>
</organism>
<sequence>MIRIGTRGSLLATTQAAIVRDALIANGHAAELVTISTLGDRSSAPIETLGVGVFTTALREAIEDGRVDAAVHSHKDLPTAQDPRFTIAAIPPRQDPRDAVVARDGLVLGELPVGSLVGTSSPRRAAQFRALGLGLEIRPLRGNLDTRLNRVSNGDLDAIVVARAGLARLGRLDDVTETLEPVQMLPAPAQGALAIECRAGDSRLATVLAELDDADTRAAVTAERALLAELEAGCSAPVGAIAEVVESIDEEGRVFEELSLRGCVAALDGSDVIRASGIGTSGRARELGLAVAAELFELGARELMWGEGNSPQGS</sequence>
<evidence type="ECO:0000255" key="1">
    <source>
        <dbReference type="HAMAP-Rule" id="MF_00260"/>
    </source>
</evidence>
<reference key="1">
    <citation type="journal article" date="2007" name="Genome Res.">
        <title>Reductive evolution and niche adaptation inferred from the genome of Mycobacterium ulcerans, the causative agent of Buruli ulcer.</title>
        <authorList>
            <person name="Stinear T.P."/>
            <person name="Seemann T."/>
            <person name="Pidot S."/>
            <person name="Frigui W."/>
            <person name="Reysset G."/>
            <person name="Garnier T."/>
            <person name="Meurice G."/>
            <person name="Simon D."/>
            <person name="Bouchier C."/>
            <person name="Ma L."/>
            <person name="Tichit M."/>
            <person name="Porter J.L."/>
            <person name="Ryan J."/>
            <person name="Johnson P.D.R."/>
            <person name="Davies J.K."/>
            <person name="Jenkin G.A."/>
            <person name="Small P.L.C."/>
            <person name="Jones L.M."/>
            <person name="Tekaia F."/>
            <person name="Laval F."/>
            <person name="Daffe M."/>
            <person name="Parkhill J."/>
            <person name="Cole S.T."/>
        </authorList>
    </citation>
    <scope>NUCLEOTIDE SEQUENCE [LARGE SCALE GENOMIC DNA]</scope>
    <source>
        <strain>Agy99</strain>
    </source>
</reference>
<keyword id="KW-0627">Porphyrin biosynthesis</keyword>
<keyword id="KW-0808">Transferase</keyword>
<gene>
    <name evidence="1" type="primary">hemC</name>
    <name type="ordered locus">MUL_4599</name>
</gene>
<proteinExistence type="inferred from homology"/>
<protein>
    <recommendedName>
        <fullName evidence="1">Porphobilinogen deaminase</fullName>
        <shortName evidence="1">PBG</shortName>
        <ecNumber evidence="1">2.5.1.61</ecNumber>
    </recommendedName>
    <alternativeName>
        <fullName evidence="1">Hydroxymethylbilane synthase</fullName>
        <shortName evidence="1">HMBS</shortName>
    </alternativeName>
    <alternativeName>
        <fullName evidence="1">Pre-uroporphyrinogen synthase</fullName>
    </alternativeName>
</protein>
<comment type="function">
    <text evidence="1">Tetrapolymerization of the monopyrrole PBG into the hydroxymethylbilane pre-uroporphyrinogen in several discrete steps.</text>
</comment>
<comment type="catalytic activity">
    <reaction evidence="1">
        <text>4 porphobilinogen + H2O = hydroxymethylbilane + 4 NH4(+)</text>
        <dbReference type="Rhea" id="RHEA:13185"/>
        <dbReference type="ChEBI" id="CHEBI:15377"/>
        <dbReference type="ChEBI" id="CHEBI:28938"/>
        <dbReference type="ChEBI" id="CHEBI:57845"/>
        <dbReference type="ChEBI" id="CHEBI:58126"/>
        <dbReference type="EC" id="2.5.1.61"/>
    </reaction>
</comment>
<comment type="cofactor">
    <cofactor evidence="1">
        <name>dipyrromethane</name>
        <dbReference type="ChEBI" id="CHEBI:60342"/>
    </cofactor>
    <text evidence="1">Binds 1 dipyrromethane group covalently.</text>
</comment>
<comment type="pathway">
    <text evidence="1">Porphyrin-containing compound metabolism; protoporphyrin-IX biosynthesis; coproporphyrinogen-III from 5-aminolevulinate: step 2/4.</text>
</comment>
<comment type="subunit">
    <text evidence="1">Monomer.</text>
</comment>
<comment type="miscellaneous">
    <text evidence="1">The porphobilinogen subunits are added to the dipyrromethane group.</text>
</comment>
<comment type="similarity">
    <text evidence="1">Belongs to the HMBS family.</text>
</comment>
<accession>A0PW29</accession>
<name>HEM3_MYCUA</name>